<geneLocation type="chloroplast"/>
<proteinExistence type="inferred from homology"/>
<gene>
    <name evidence="1" type="primary">ndhI</name>
</gene>
<organism>
    <name type="scientific">Amborella trichopoda</name>
    <dbReference type="NCBI Taxonomy" id="13333"/>
    <lineage>
        <taxon>Eukaryota</taxon>
        <taxon>Viridiplantae</taxon>
        <taxon>Streptophyta</taxon>
        <taxon>Embryophyta</taxon>
        <taxon>Tracheophyta</taxon>
        <taxon>Spermatophyta</taxon>
        <taxon>Magnoliopsida</taxon>
        <taxon>Amborellales</taxon>
        <taxon>Amborellaceae</taxon>
        <taxon>Amborella</taxon>
    </lineage>
</organism>
<sequence length="180" mass="20930">MFPMVTGFMNYGQQAVRAARYIGQSFMITLSHANRLPVTIQYPYEKSITSERFRGRIHFEFDKCIACEVCVRVCPIDLPVVDWRFETDIRKKRLLNYSIDFGICIFCGNCVEYCPTNCLSMTEEYELSTYDRHELNYNQIALGRLPIPVVGDYTIQTIMNSNQTKIAMNKPLDSRTITNY</sequence>
<reference key="1">
    <citation type="journal article" date="2003" name="Mol. Biol. Evol.">
        <title>Analysis of the Amborella trichopoda chloroplast genome sequence suggests that Amborella is not a basal angiosperm.</title>
        <authorList>
            <person name="Goremykin V.V."/>
            <person name="Hirsch-Ernst K.I."/>
            <person name="Wolfl S."/>
            <person name="Hellwig F.H."/>
        </authorList>
    </citation>
    <scope>NUCLEOTIDE SEQUENCE [LARGE SCALE GENOMIC DNA]</scope>
</reference>
<protein>
    <recommendedName>
        <fullName evidence="1">NAD(P)H-quinone oxidoreductase subunit I, chloroplastic</fullName>
        <ecNumber evidence="1">7.1.1.-</ecNumber>
    </recommendedName>
    <alternativeName>
        <fullName evidence="1">NAD(P)H dehydrogenase subunit I</fullName>
        <shortName evidence="1">NDH subunit I</shortName>
    </alternativeName>
    <alternativeName>
        <fullName evidence="1">NADH-plastoquinone oxidoreductase subunit I</fullName>
    </alternativeName>
</protein>
<comment type="function">
    <text evidence="1">NDH shuttles electrons from NAD(P)H:plastoquinone, via FMN and iron-sulfur (Fe-S) centers, to quinones in the photosynthetic chain and possibly in a chloroplast respiratory chain. The immediate electron acceptor for the enzyme in this species is believed to be plastoquinone. Couples the redox reaction to proton translocation, and thus conserves the redox energy in a proton gradient.</text>
</comment>
<comment type="catalytic activity">
    <reaction evidence="1">
        <text>a plastoquinone + NADH + (n+1) H(+)(in) = a plastoquinol + NAD(+) + n H(+)(out)</text>
        <dbReference type="Rhea" id="RHEA:42608"/>
        <dbReference type="Rhea" id="RHEA-COMP:9561"/>
        <dbReference type="Rhea" id="RHEA-COMP:9562"/>
        <dbReference type="ChEBI" id="CHEBI:15378"/>
        <dbReference type="ChEBI" id="CHEBI:17757"/>
        <dbReference type="ChEBI" id="CHEBI:57540"/>
        <dbReference type="ChEBI" id="CHEBI:57945"/>
        <dbReference type="ChEBI" id="CHEBI:62192"/>
    </reaction>
</comment>
<comment type="catalytic activity">
    <reaction evidence="1">
        <text>a plastoquinone + NADPH + (n+1) H(+)(in) = a plastoquinol + NADP(+) + n H(+)(out)</text>
        <dbReference type="Rhea" id="RHEA:42612"/>
        <dbReference type="Rhea" id="RHEA-COMP:9561"/>
        <dbReference type="Rhea" id="RHEA-COMP:9562"/>
        <dbReference type="ChEBI" id="CHEBI:15378"/>
        <dbReference type="ChEBI" id="CHEBI:17757"/>
        <dbReference type="ChEBI" id="CHEBI:57783"/>
        <dbReference type="ChEBI" id="CHEBI:58349"/>
        <dbReference type="ChEBI" id="CHEBI:62192"/>
    </reaction>
</comment>
<comment type="cofactor">
    <cofactor evidence="1">
        <name>[4Fe-4S] cluster</name>
        <dbReference type="ChEBI" id="CHEBI:49883"/>
    </cofactor>
    <text evidence="1">Binds 2 [4Fe-4S] clusters per subunit.</text>
</comment>
<comment type="subunit">
    <text evidence="1">NDH is composed of at least 16 different subunits, 5 of which are encoded in the nucleus.</text>
</comment>
<comment type="subcellular location">
    <subcellularLocation>
        <location evidence="1">Plastid</location>
        <location evidence="1">Chloroplast thylakoid membrane</location>
        <topology evidence="1">Peripheral membrane protein</topology>
    </subcellularLocation>
</comment>
<comment type="similarity">
    <text evidence="1">Belongs to the complex I 23 kDa subunit family.</text>
</comment>
<feature type="chain" id="PRO_0000245650" description="NAD(P)H-quinone oxidoreductase subunit I, chloroplastic">
    <location>
        <begin position="1"/>
        <end position="180"/>
    </location>
</feature>
<feature type="domain" description="4Fe-4S ferredoxin-type 1" evidence="1">
    <location>
        <begin position="55"/>
        <end position="84"/>
    </location>
</feature>
<feature type="domain" description="4Fe-4S ferredoxin-type 2" evidence="1">
    <location>
        <begin position="95"/>
        <end position="124"/>
    </location>
</feature>
<feature type="binding site" evidence="1">
    <location>
        <position position="64"/>
    </location>
    <ligand>
        <name>[4Fe-4S] cluster</name>
        <dbReference type="ChEBI" id="CHEBI:49883"/>
        <label>1</label>
    </ligand>
</feature>
<feature type="binding site" evidence="1">
    <location>
        <position position="67"/>
    </location>
    <ligand>
        <name>[4Fe-4S] cluster</name>
        <dbReference type="ChEBI" id="CHEBI:49883"/>
        <label>1</label>
    </ligand>
</feature>
<feature type="binding site" evidence="1">
    <location>
        <position position="70"/>
    </location>
    <ligand>
        <name>[4Fe-4S] cluster</name>
        <dbReference type="ChEBI" id="CHEBI:49883"/>
        <label>1</label>
    </ligand>
</feature>
<feature type="binding site" evidence="1">
    <location>
        <position position="74"/>
    </location>
    <ligand>
        <name>[4Fe-4S] cluster</name>
        <dbReference type="ChEBI" id="CHEBI:49883"/>
        <label>2</label>
    </ligand>
</feature>
<feature type="binding site" evidence="1">
    <location>
        <position position="104"/>
    </location>
    <ligand>
        <name>[4Fe-4S] cluster</name>
        <dbReference type="ChEBI" id="CHEBI:49883"/>
        <label>2</label>
    </ligand>
</feature>
<feature type="binding site" evidence="1">
    <location>
        <position position="107"/>
    </location>
    <ligand>
        <name>[4Fe-4S] cluster</name>
        <dbReference type="ChEBI" id="CHEBI:49883"/>
        <label>2</label>
    </ligand>
</feature>
<feature type="binding site" evidence="1">
    <location>
        <position position="110"/>
    </location>
    <ligand>
        <name>[4Fe-4S] cluster</name>
        <dbReference type="ChEBI" id="CHEBI:49883"/>
        <label>2</label>
    </ligand>
</feature>
<feature type="binding site" evidence="1">
    <location>
        <position position="114"/>
    </location>
    <ligand>
        <name>[4Fe-4S] cluster</name>
        <dbReference type="ChEBI" id="CHEBI:49883"/>
        <label>1</label>
    </ligand>
</feature>
<accession>Q70XW0</accession>
<name>NDHI_AMBTC</name>
<dbReference type="EC" id="7.1.1.-" evidence="1"/>
<dbReference type="EMBL" id="AJ506156">
    <property type="protein sequence ID" value="CAD45160.1"/>
    <property type="molecule type" value="Genomic_DNA"/>
</dbReference>
<dbReference type="RefSeq" id="NP_904153.1">
    <property type="nucleotide sequence ID" value="NC_005086.1"/>
</dbReference>
<dbReference type="SMR" id="Q70XW0"/>
<dbReference type="STRING" id="13333.Q70XW0"/>
<dbReference type="GeneID" id="2546612"/>
<dbReference type="KEGG" id="atr:2546612"/>
<dbReference type="OrthoDB" id="24758at2759"/>
<dbReference type="Proteomes" id="UP000017836">
    <property type="component" value="Chloroplast"/>
</dbReference>
<dbReference type="GO" id="GO:0009535">
    <property type="term" value="C:chloroplast thylakoid membrane"/>
    <property type="evidence" value="ECO:0007669"/>
    <property type="project" value="UniProtKB-SubCell"/>
</dbReference>
<dbReference type="GO" id="GO:0051539">
    <property type="term" value="F:4 iron, 4 sulfur cluster binding"/>
    <property type="evidence" value="ECO:0007669"/>
    <property type="project" value="UniProtKB-KW"/>
</dbReference>
<dbReference type="GO" id="GO:0005506">
    <property type="term" value="F:iron ion binding"/>
    <property type="evidence" value="ECO:0007669"/>
    <property type="project" value="UniProtKB-UniRule"/>
</dbReference>
<dbReference type="GO" id="GO:0008137">
    <property type="term" value="F:NADH dehydrogenase (ubiquinone) activity"/>
    <property type="evidence" value="ECO:0007669"/>
    <property type="project" value="InterPro"/>
</dbReference>
<dbReference type="GO" id="GO:0048038">
    <property type="term" value="F:quinone binding"/>
    <property type="evidence" value="ECO:0007669"/>
    <property type="project" value="UniProtKB-KW"/>
</dbReference>
<dbReference type="GO" id="GO:0019684">
    <property type="term" value="P:photosynthesis, light reaction"/>
    <property type="evidence" value="ECO:0007669"/>
    <property type="project" value="UniProtKB-UniRule"/>
</dbReference>
<dbReference type="Gene3D" id="3.30.70.3270">
    <property type="match status" value="1"/>
</dbReference>
<dbReference type="HAMAP" id="MF_01351">
    <property type="entry name" value="NDH1_NuoI"/>
    <property type="match status" value="1"/>
</dbReference>
<dbReference type="InterPro" id="IPR017896">
    <property type="entry name" value="4Fe4S_Fe-S-bd"/>
</dbReference>
<dbReference type="InterPro" id="IPR017900">
    <property type="entry name" value="4Fe4S_Fe_S_CS"/>
</dbReference>
<dbReference type="InterPro" id="IPR010226">
    <property type="entry name" value="NADH_quinone_OxRdtase_chainI"/>
</dbReference>
<dbReference type="InterPro" id="IPR004497">
    <property type="entry name" value="NDHI"/>
</dbReference>
<dbReference type="NCBIfam" id="TIGR00403">
    <property type="entry name" value="ndhI"/>
    <property type="match status" value="1"/>
</dbReference>
<dbReference type="NCBIfam" id="TIGR01971">
    <property type="entry name" value="NuoI"/>
    <property type="match status" value="1"/>
</dbReference>
<dbReference type="NCBIfam" id="NF004537">
    <property type="entry name" value="PRK05888.1-3"/>
    <property type="match status" value="1"/>
</dbReference>
<dbReference type="PANTHER" id="PTHR47275">
    <property type="entry name" value="NAD(P)H-QUINONE OXIDOREDUCTASE SUBUNIT I, CHLOROPLASTIC"/>
    <property type="match status" value="1"/>
</dbReference>
<dbReference type="PANTHER" id="PTHR47275:SF1">
    <property type="entry name" value="NAD(P)H-QUINONE OXIDOREDUCTASE SUBUNIT I, CHLOROPLASTIC"/>
    <property type="match status" value="1"/>
</dbReference>
<dbReference type="Pfam" id="PF12838">
    <property type="entry name" value="Fer4_7"/>
    <property type="match status" value="1"/>
</dbReference>
<dbReference type="SUPFAM" id="SSF54862">
    <property type="entry name" value="4Fe-4S ferredoxins"/>
    <property type="match status" value="1"/>
</dbReference>
<dbReference type="PROSITE" id="PS00198">
    <property type="entry name" value="4FE4S_FER_1"/>
    <property type="match status" value="2"/>
</dbReference>
<dbReference type="PROSITE" id="PS51379">
    <property type="entry name" value="4FE4S_FER_2"/>
    <property type="match status" value="2"/>
</dbReference>
<evidence type="ECO:0000255" key="1">
    <source>
        <dbReference type="HAMAP-Rule" id="MF_01351"/>
    </source>
</evidence>
<keyword id="KW-0004">4Fe-4S</keyword>
<keyword id="KW-0150">Chloroplast</keyword>
<keyword id="KW-0408">Iron</keyword>
<keyword id="KW-0411">Iron-sulfur</keyword>
<keyword id="KW-0472">Membrane</keyword>
<keyword id="KW-0479">Metal-binding</keyword>
<keyword id="KW-0520">NAD</keyword>
<keyword id="KW-0521">NADP</keyword>
<keyword id="KW-0934">Plastid</keyword>
<keyword id="KW-0618">Plastoquinone</keyword>
<keyword id="KW-0874">Quinone</keyword>
<keyword id="KW-1185">Reference proteome</keyword>
<keyword id="KW-0677">Repeat</keyword>
<keyword id="KW-0793">Thylakoid</keyword>
<keyword id="KW-1278">Translocase</keyword>